<keyword id="KW-0167">Capsid protein</keyword>
<keyword id="KW-1176">Cytoplasmic inwards viral transport</keyword>
<keyword id="KW-1015">Disulfide bond</keyword>
<keyword id="KW-0238">DNA-binding</keyword>
<keyword id="KW-1039">Host endosome</keyword>
<keyword id="KW-1040">Host Golgi apparatus</keyword>
<keyword id="KW-1048">Host nucleus</keyword>
<keyword id="KW-0945">Host-virus interaction</keyword>
<keyword id="KW-0426">Late protein</keyword>
<keyword id="KW-1177">Microtubular inwards viral transport</keyword>
<keyword id="KW-0597">Phosphoprotein</keyword>
<keyword id="KW-1185">Reference proteome</keyword>
<keyword id="KW-1163">Viral penetration into host nucleus</keyword>
<keyword id="KW-0946">Virion</keyword>
<keyword id="KW-1160">Virus entry into host cell</keyword>
<evidence type="ECO:0000255" key="1">
    <source>
        <dbReference type="HAMAP-Rule" id="MF_04003"/>
    </source>
</evidence>
<feature type="chain" id="PRO_0000133577" description="Minor capsid protein L2">
    <location>
        <begin position="1"/>
        <end position="470"/>
    </location>
</feature>
<feature type="short sequence motif" description="Nuclear localization signal" evidence="1">
    <location>
        <begin position="1"/>
        <end position="12"/>
    </location>
</feature>
<feature type="short sequence motif" description="Nuclear localization signal" evidence="1">
    <location>
        <begin position="449"/>
        <end position="459"/>
    </location>
</feature>
<feature type="disulfide bond" evidence="1">
    <location>
        <begin position="21"/>
        <end position="27"/>
    </location>
</feature>
<reference key="1">
    <citation type="journal article" date="1994" name="Curr. Top. Microbiol. Immunol.">
        <title>Primer-directed sequencing of human papillomavirus types.</title>
        <authorList>
            <person name="Delius H."/>
            <person name="Hofmann B."/>
        </authorList>
    </citation>
    <scope>NUCLEOTIDE SEQUENCE [GENOMIC DNA]</scope>
</reference>
<name>VL2_HPV10</name>
<organism>
    <name type="scientific">Human papillomavirus type 10</name>
    <dbReference type="NCBI Taxonomy" id="333759"/>
    <lineage>
        <taxon>Viruses</taxon>
        <taxon>Monodnaviria</taxon>
        <taxon>Shotokuvirae</taxon>
        <taxon>Cossaviricota</taxon>
        <taxon>Papovaviricetes</taxon>
        <taxon>Zurhausenvirales</taxon>
        <taxon>Papillomaviridae</taxon>
        <taxon>Firstpapillomavirinae</taxon>
        <taxon>Alphapapillomavirus</taxon>
        <taxon>Alphapapillomavirus 2</taxon>
    </lineage>
</organism>
<accession>P36747</accession>
<sequence length="470" mass="50584">MVAQRARRRKRASATQLYRTCKASGTCPPDVIPKVEGTTLADRILQWGSLGVYLGGLGIGTGSGTGGRTGYVPISTRPGTVVDVSVPARPPVVIEPVGPSDPSIVNLLEDSSIINSGSTIPTFSGTSGFEVTSSATTTPAVLDITPASENVVISSTNFTNPAFTEPSLVEVPQSGEVSGHILISTPTAGTHGYEEIPMDTFASSGTGTEPISSTPVPGVSRIAGPRLYSRANTQVKVSDPAFLSRPSSLLTFDNPVFEPEDETIIFERPYSPSRVPDPDFLDIVRLHRPALTSRRGTVRFSRLGQKFSMRTRSGKGIGARVHYYQDLSPIAPIEDIEMEPLLAPAASDTIYDIFADVDDGDVAFTEGYRSTTQSRGYNTTSPLSSTLSTKYGNVTIPFVSPVDVTLHTGPDIVLPTSAQWPYVPLSPADTTHYVYIDGGDFYLWPVTFHFSRHRRRKRVSYFFADGTLAL</sequence>
<comment type="function">
    <text evidence="1">Minor protein of the capsid that localizes along the inner surface of the virion, within the central cavities beneath the L1 pentamers. Plays a role in capsid stabilization through interaction with the major capsid protein L1. Once the virion enters the host cell, L2 escorts the genomic DNA into the nucleus by promoting escape from the endosomal compartments and traffic through the host Golgi network. Mechanistically, the C-terminus of L2 possesses a cell-penetrating peptide that protudes from the host endosome, interacts with host cytoplasmic retromer cargo and thereby mediates the capsid delivery to the host trans-Golgi network. Plays a role through its interaction with host dynein in the intracellular microtubule-dependent transport of viral capsid toward the nucleus. Mediates the viral genome import into the nucleus through binding to host importins. Once within the nucleus, L2 localizes viral genomes to host PML bodies in order to activate early gene expression for establishment of infection. Later on, promotes late gene expression by interacting with the viral E2 protein and by inhibiting its transcriptional activation functions. During virion assembly, encapsidates the genome by direct interaction with the viral DNA.</text>
</comment>
<comment type="subunit">
    <text evidence="1">Interacts with major capsid protein L1. Interacts with E2; this interaction inhibits E2 transcriptional activity but not the DNA replication function E2. Interacts with host GADD45GIP1. Interacts with host HSPA8; this interaction is required for L2 nuclear translocation. Interacts with host importins KPNB2 and KPNB3. Forms a complex with importin alpha2-beta1 heterodimers via interaction with the importin alpha2 adapter. Interacts with host DYNLT1; this interaction is essential for virus intracellular transport during entry. Interacts (via C-terminus) with host retromer subunits VPS35 and VPS29.</text>
</comment>
<comment type="subcellular location">
    <subcellularLocation>
        <location evidence="1">Virion</location>
    </subcellularLocation>
    <subcellularLocation>
        <location evidence="1">Host nucleus</location>
    </subcellularLocation>
    <subcellularLocation>
        <location evidence="1">Host early endosome</location>
    </subcellularLocation>
    <subcellularLocation>
        <location evidence="1">Host Golgi apparatus</location>
    </subcellularLocation>
</comment>
<comment type="PTM">
    <text evidence="1">Highly phosphorylated.</text>
</comment>
<comment type="similarity">
    <text evidence="1">Belongs to the papillomaviridae L2 protein family.</text>
</comment>
<gene>
    <name evidence="1" type="primary">L2</name>
</gene>
<dbReference type="EMBL" id="X74465">
    <property type="protein sequence ID" value="CAA52493.1"/>
    <property type="molecule type" value="Genomic_DNA"/>
</dbReference>
<dbReference type="PIR" id="S36536">
    <property type="entry name" value="S36536"/>
</dbReference>
<dbReference type="RefSeq" id="NP_041745.1">
    <property type="nucleotide sequence ID" value="NC_001576.1"/>
</dbReference>
<dbReference type="GeneID" id="1489378"/>
<dbReference type="KEGG" id="vg:1489378"/>
<dbReference type="OrthoDB" id="8047at10239"/>
<dbReference type="Proteomes" id="UP000009105">
    <property type="component" value="Genome"/>
</dbReference>
<dbReference type="GO" id="GO:0043657">
    <property type="term" value="C:host cell"/>
    <property type="evidence" value="ECO:0007669"/>
    <property type="project" value="GOC"/>
</dbReference>
<dbReference type="GO" id="GO:0044174">
    <property type="term" value="C:host cell endosome"/>
    <property type="evidence" value="ECO:0007669"/>
    <property type="project" value="UniProtKB-KW"/>
</dbReference>
<dbReference type="GO" id="GO:0044177">
    <property type="term" value="C:host cell Golgi apparatus"/>
    <property type="evidence" value="ECO:0007669"/>
    <property type="project" value="UniProtKB-SubCell"/>
</dbReference>
<dbReference type="GO" id="GO:0042025">
    <property type="term" value="C:host cell nucleus"/>
    <property type="evidence" value="ECO:0007669"/>
    <property type="project" value="UniProtKB-SubCell"/>
</dbReference>
<dbReference type="GO" id="GO:0019028">
    <property type="term" value="C:viral capsid"/>
    <property type="evidence" value="ECO:0007669"/>
    <property type="project" value="UniProtKB-UniRule"/>
</dbReference>
<dbReference type="GO" id="GO:0003677">
    <property type="term" value="F:DNA binding"/>
    <property type="evidence" value="ECO:0007669"/>
    <property type="project" value="UniProtKB-UniRule"/>
</dbReference>
<dbReference type="GO" id="GO:0005198">
    <property type="term" value="F:structural molecule activity"/>
    <property type="evidence" value="ECO:0007669"/>
    <property type="project" value="UniProtKB-UniRule"/>
</dbReference>
<dbReference type="GO" id="GO:0075521">
    <property type="term" value="P:microtubule-dependent intracellular transport of viral material towards nucleus"/>
    <property type="evidence" value="ECO:0007669"/>
    <property type="project" value="UniProtKB-UniRule"/>
</dbReference>
<dbReference type="GO" id="GO:0046718">
    <property type="term" value="P:symbiont entry into host cell"/>
    <property type="evidence" value="ECO:0007669"/>
    <property type="project" value="UniProtKB-KW"/>
</dbReference>
<dbReference type="GO" id="GO:0075732">
    <property type="term" value="P:viral penetration into host nucleus"/>
    <property type="evidence" value="ECO:0007669"/>
    <property type="project" value="UniProtKB-KW"/>
</dbReference>
<dbReference type="HAMAP" id="MF_04003">
    <property type="entry name" value="PPV_L2"/>
    <property type="match status" value="1"/>
</dbReference>
<dbReference type="InterPro" id="IPR000784">
    <property type="entry name" value="Late_L2"/>
</dbReference>
<dbReference type="Pfam" id="PF00513">
    <property type="entry name" value="Late_protein_L2"/>
    <property type="match status" value="1"/>
</dbReference>
<organismHost>
    <name type="scientific">Homo sapiens</name>
    <name type="common">Human</name>
    <dbReference type="NCBI Taxonomy" id="9606"/>
</organismHost>
<proteinExistence type="inferred from homology"/>
<protein>
    <recommendedName>
        <fullName evidence="1">Minor capsid protein L2</fullName>
    </recommendedName>
</protein>